<proteinExistence type="inferred from homology"/>
<keyword id="KW-0963">Cytoplasm</keyword>
<keyword id="KW-0255">Endonuclease</keyword>
<keyword id="KW-0378">Hydrolase</keyword>
<keyword id="KW-0464">Manganese</keyword>
<keyword id="KW-0479">Metal-binding</keyword>
<keyword id="KW-0540">Nuclease</keyword>
<protein>
    <recommendedName>
        <fullName evidence="1">Ribonuclease HII</fullName>
        <shortName evidence="1">RNase HII</shortName>
        <ecNumber evidence="1">3.1.26.4</ecNumber>
    </recommendedName>
</protein>
<evidence type="ECO:0000255" key="1">
    <source>
        <dbReference type="HAMAP-Rule" id="MF_00052"/>
    </source>
</evidence>
<evidence type="ECO:0000255" key="2">
    <source>
        <dbReference type="PROSITE-ProRule" id="PRU01319"/>
    </source>
</evidence>
<gene>
    <name evidence="1" type="primary">rnhB</name>
    <name type="ordered locus">COXBURSA331_A1492</name>
</gene>
<reference key="1">
    <citation type="submission" date="2007-11" db="EMBL/GenBank/DDBJ databases">
        <title>Genome sequencing of phylogenetically and phenotypically diverse Coxiella burnetii isolates.</title>
        <authorList>
            <person name="Seshadri R."/>
            <person name="Samuel J.E."/>
        </authorList>
    </citation>
    <scope>NUCLEOTIDE SEQUENCE [LARGE SCALE GENOMIC DNA]</scope>
    <source>
        <strain>RSA 331 / Henzerling II</strain>
    </source>
</reference>
<accession>A9N8L5</accession>
<organism>
    <name type="scientific">Coxiella burnetii (strain RSA 331 / Henzerling II)</name>
    <dbReference type="NCBI Taxonomy" id="360115"/>
    <lineage>
        <taxon>Bacteria</taxon>
        <taxon>Pseudomonadati</taxon>
        <taxon>Pseudomonadota</taxon>
        <taxon>Gammaproteobacteria</taxon>
        <taxon>Legionellales</taxon>
        <taxon>Coxiellaceae</taxon>
        <taxon>Coxiella</taxon>
    </lineage>
</organism>
<name>RNH2_COXBR</name>
<comment type="function">
    <text evidence="1">Endonuclease that specifically degrades the RNA of RNA-DNA hybrids.</text>
</comment>
<comment type="catalytic activity">
    <reaction evidence="1">
        <text>Endonucleolytic cleavage to 5'-phosphomonoester.</text>
        <dbReference type="EC" id="3.1.26.4"/>
    </reaction>
</comment>
<comment type="cofactor">
    <cofactor evidence="1">
        <name>Mn(2+)</name>
        <dbReference type="ChEBI" id="CHEBI:29035"/>
    </cofactor>
    <cofactor evidence="1">
        <name>Mg(2+)</name>
        <dbReference type="ChEBI" id="CHEBI:18420"/>
    </cofactor>
    <text evidence="1">Manganese or magnesium. Binds 1 divalent metal ion per monomer in the absence of substrate. May bind a second metal ion after substrate binding.</text>
</comment>
<comment type="subcellular location">
    <subcellularLocation>
        <location evidence="1">Cytoplasm</location>
    </subcellularLocation>
</comment>
<comment type="similarity">
    <text evidence="1">Belongs to the RNase HII family.</text>
</comment>
<feature type="chain" id="PRO_1000074920" description="Ribonuclease HII">
    <location>
        <begin position="1"/>
        <end position="202"/>
    </location>
</feature>
<feature type="domain" description="RNase H type-2" evidence="2">
    <location>
        <begin position="12"/>
        <end position="201"/>
    </location>
</feature>
<feature type="binding site" evidence="1">
    <location>
        <position position="18"/>
    </location>
    <ligand>
        <name>a divalent metal cation</name>
        <dbReference type="ChEBI" id="CHEBI:60240"/>
    </ligand>
</feature>
<feature type="binding site" evidence="1">
    <location>
        <position position="19"/>
    </location>
    <ligand>
        <name>a divalent metal cation</name>
        <dbReference type="ChEBI" id="CHEBI:60240"/>
    </ligand>
</feature>
<feature type="binding site" evidence="1">
    <location>
        <position position="110"/>
    </location>
    <ligand>
        <name>a divalent metal cation</name>
        <dbReference type="ChEBI" id="CHEBI:60240"/>
    </ligand>
</feature>
<dbReference type="EC" id="3.1.26.4" evidence="1"/>
<dbReference type="EMBL" id="CP000890">
    <property type="protein sequence ID" value="ABX77926.1"/>
    <property type="molecule type" value="Genomic_DNA"/>
</dbReference>
<dbReference type="RefSeq" id="WP_005770967.1">
    <property type="nucleotide sequence ID" value="NC_010117.1"/>
</dbReference>
<dbReference type="SMR" id="A9N8L5"/>
<dbReference type="KEGG" id="cbs:COXBURSA331_A1492"/>
<dbReference type="HOGENOM" id="CLU_036532_3_2_6"/>
<dbReference type="GO" id="GO:0005737">
    <property type="term" value="C:cytoplasm"/>
    <property type="evidence" value="ECO:0007669"/>
    <property type="project" value="UniProtKB-SubCell"/>
</dbReference>
<dbReference type="GO" id="GO:0032299">
    <property type="term" value="C:ribonuclease H2 complex"/>
    <property type="evidence" value="ECO:0007669"/>
    <property type="project" value="TreeGrafter"/>
</dbReference>
<dbReference type="GO" id="GO:0030145">
    <property type="term" value="F:manganese ion binding"/>
    <property type="evidence" value="ECO:0007669"/>
    <property type="project" value="UniProtKB-UniRule"/>
</dbReference>
<dbReference type="GO" id="GO:0003723">
    <property type="term" value="F:RNA binding"/>
    <property type="evidence" value="ECO:0007669"/>
    <property type="project" value="InterPro"/>
</dbReference>
<dbReference type="GO" id="GO:0004523">
    <property type="term" value="F:RNA-DNA hybrid ribonuclease activity"/>
    <property type="evidence" value="ECO:0007669"/>
    <property type="project" value="UniProtKB-UniRule"/>
</dbReference>
<dbReference type="GO" id="GO:0043137">
    <property type="term" value="P:DNA replication, removal of RNA primer"/>
    <property type="evidence" value="ECO:0007669"/>
    <property type="project" value="TreeGrafter"/>
</dbReference>
<dbReference type="GO" id="GO:0006298">
    <property type="term" value="P:mismatch repair"/>
    <property type="evidence" value="ECO:0007669"/>
    <property type="project" value="TreeGrafter"/>
</dbReference>
<dbReference type="CDD" id="cd07182">
    <property type="entry name" value="RNase_HII_bacteria_HII_like"/>
    <property type="match status" value="1"/>
</dbReference>
<dbReference type="FunFam" id="3.30.420.10:FF:000006">
    <property type="entry name" value="Ribonuclease HII"/>
    <property type="match status" value="1"/>
</dbReference>
<dbReference type="Gene3D" id="3.30.420.10">
    <property type="entry name" value="Ribonuclease H-like superfamily/Ribonuclease H"/>
    <property type="match status" value="1"/>
</dbReference>
<dbReference type="HAMAP" id="MF_00052_B">
    <property type="entry name" value="RNase_HII_B"/>
    <property type="match status" value="1"/>
</dbReference>
<dbReference type="InterPro" id="IPR022898">
    <property type="entry name" value="RNase_HII"/>
</dbReference>
<dbReference type="InterPro" id="IPR001352">
    <property type="entry name" value="RNase_HII/HIII"/>
</dbReference>
<dbReference type="InterPro" id="IPR024567">
    <property type="entry name" value="RNase_HII/HIII_dom"/>
</dbReference>
<dbReference type="InterPro" id="IPR012337">
    <property type="entry name" value="RNaseH-like_sf"/>
</dbReference>
<dbReference type="InterPro" id="IPR036397">
    <property type="entry name" value="RNaseH_sf"/>
</dbReference>
<dbReference type="NCBIfam" id="NF000594">
    <property type="entry name" value="PRK00015.1-1"/>
    <property type="match status" value="1"/>
</dbReference>
<dbReference type="NCBIfam" id="NF000595">
    <property type="entry name" value="PRK00015.1-3"/>
    <property type="match status" value="1"/>
</dbReference>
<dbReference type="NCBIfam" id="NF000596">
    <property type="entry name" value="PRK00015.1-4"/>
    <property type="match status" value="1"/>
</dbReference>
<dbReference type="PANTHER" id="PTHR10954">
    <property type="entry name" value="RIBONUCLEASE H2 SUBUNIT A"/>
    <property type="match status" value="1"/>
</dbReference>
<dbReference type="PANTHER" id="PTHR10954:SF18">
    <property type="entry name" value="RIBONUCLEASE HII"/>
    <property type="match status" value="1"/>
</dbReference>
<dbReference type="Pfam" id="PF01351">
    <property type="entry name" value="RNase_HII"/>
    <property type="match status" value="1"/>
</dbReference>
<dbReference type="SUPFAM" id="SSF53098">
    <property type="entry name" value="Ribonuclease H-like"/>
    <property type="match status" value="1"/>
</dbReference>
<dbReference type="PROSITE" id="PS51975">
    <property type="entry name" value="RNASE_H_2"/>
    <property type="match status" value="1"/>
</dbReference>
<sequence>MDAPFAKTPSNLLIAGVDEAGRGPLAGPVITAAVILNPEIIIEGLADSKKLSLKKREELYEKIITNCKAFAIARADVEEIDRLNIFRATLLAMQRAINQLSIQPDKVLIDGHCCPDLPYETQAIVQGDQNVPAISAASILAKVTRDREMLKYDAQYPDYGFAIHKGYGTKAHLAAIHRFGITPVHRKSFEPVRQLKLFIPEE</sequence>